<evidence type="ECO:0000255" key="1">
    <source>
        <dbReference type="HAMAP-Rule" id="MF_03115"/>
    </source>
</evidence>
<evidence type="ECO:0000305" key="2"/>
<gene>
    <name type="ORF">POPTRDRAFT_761104</name>
</gene>
<protein>
    <recommendedName>
        <fullName evidence="1">Anamorsin homolog</fullName>
    </recommendedName>
    <alternativeName>
        <fullName evidence="1">Fe-S cluster assembly protein DRE2 homolog</fullName>
    </alternativeName>
</protein>
<reference key="1">
    <citation type="journal article" date="2008" name="BMC Genomics">
        <title>Analysis of 4,664 high-quality sequence-finished poplar full-length cDNA clones and their utility for the discovery of genes responding to insect feeding.</title>
        <authorList>
            <person name="Ralph S.G."/>
            <person name="Chun H.J."/>
            <person name="Cooper D."/>
            <person name="Kirkpatrick R."/>
            <person name="Kolosova N."/>
            <person name="Gunter L."/>
            <person name="Tuskan G.A."/>
            <person name="Douglas C.J."/>
            <person name="Holt R.A."/>
            <person name="Jones S.J."/>
            <person name="Marra M.A."/>
            <person name="Bohlmann J."/>
        </authorList>
    </citation>
    <scope>NUCLEOTIDE SEQUENCE [LARGE SCALE MRNA]</scope>
    <source>
        <tissue>Cambium</tissue>
        <tissue>Phloem</tissue>
    </source>
</reference>
<reference key="2">
    <citation type="journal article" date="2006" name="Science">
        <title>The genome of black cottonwood, Populus trichocarpa (Torr. &amp; Gray).</title>
        <authorList>
            <person name="Tuskan G.A."/>
            <person name="Difazio S."/>
            <person name="Jansson S."/>
            <person name="Bohlmann J."/>
            <person name="Grigoriev I."/>
            <person name="Hellsten U."/>
            <person name="Putnam N."/>
            <person name="Ralph S."/>
            <person name="Rombauts S."/>
            <person name="Salamov A."/>
            <person name="Schein J."/>
            <person name="Sterck L."/>
            <person name="Aerts A."/>
            <person name="Bhalerao R.R."/>
            <person name="Bhalerao R.P."/>
            <person name="Blaudez D."/>
            <person name="Boerjan W."/>
            <person name="Brun A."/>
            <person name="Brunner A."/>
            <person name="Busov V."/>
            <person name="Campbell M."/>
            <person name="Carlson J."/>
            <person name="Chalot M."/>
            <person name="Chapman J."/>
            <person name="Chen G.-L."/>
            <person name="Cooper D."/>
            <person name="Coutinho P.M."/>
            <person name="Couturier J."/>
            <person name="Covert S."/>
            <person name="Cronk Q."/>
            <person name="Cunningham R."/>
            <person name="Davis J."/>
            <person name="Degroeve S."/>
            <person name="Dejardin A."/>
            <person name="dePamphilis C.W."/>
            <person name="Detter J."/>
            <person name="Dirks B."/>
            <person name="Dubchak I."/>
            <person name="Duplessis S."/>
            <person name="Ehlting J."/>
            <person name="Ellis B."/>
            <person name="Gendler K."/>
            <person name="Goodstein D."/>
            <person name="Gribskov M."/>
            <person name="Grimwood J."/>
            <person name="Groover A."/>
            <person name="Gunter L."/>
            <person name="Hamberger B."/>
            <person name="Heinze B."/>
            <person name="Helariutta Y."/>
            <person name="Henrissat B."/>
            <person name="Holligan D."/>
            <person name="Holt R."/>
            <person name="Huang W."/>
            <person name="Islam-Faridi N."/>
            <person name="Jones S."/>
            <person name="Jones-Rhoades M."/>
            <person name="Jorgensen R."/>
            <person name="Joshi C."/>
            <person name="Kangasjaervi J."/>
            <person name="Karlsson J."/>
            <person name="Kelleher C."/>
            <person name="Kirkpatrick R."/>
            <person name="Kirst M."/>
            <person name="Kohler A."/>
            <person name="Kalluri U."/>
            <person name="Larimer F."/>
            <person name="Leebens-Mack J."/>
            <person name="Leple J.-C."/>
            <person name="Locascio P."/>
            <person name="Lou Y."/>
            <person name="Lucas S."/>
            <person name="Martin F."/>
            <person name="Montanini B."/>
            <person name="Napoli C."/>
            <person name="Nelson D.R."/>
            <person name="Nelson C."/>
            <person name="Nieminen K."/>
            <person name="Nilsson O."/>
            <person name="Pereda V."/>
            <person name="Peter G."/>
            <person name="Philippe R."/>
            <person name="Pilate G."/>
            <person name="Poliakov A."/>
            <person name="Razumovskaya J."/>
            <person name="Richardson P."/>
            <person name="Rinaldi C."/>
            <person name="Ritland K."/>
            <person name="Rouze P."/>
            <person name="Ryaboy D."/>
            <person name="Schmutz J."/>
            <person name="Schrader J."/>
            <person name="Segerman B."/>
            <person name="Shin H."/>
            <person name="Siddiqui A."/>
            <person name="Sterky F."/>
            <person name="Terry A."/>
            <person name="Tsai C.-J."/>
            <person name="Uberbacher E."/>
            <person name="Unneberg P."/>
            <person name="Vahala J."/>
            <person name="Wall K."/>
            <person name="Wessler S."/>
            <person name="Yang G."/>
            <person name="Yin T."/>
            <person name="Douglas C."/>
            <person name="Marra M."/>
            <person name="Sandberg G."/>
            <person name="Van de Peer Y."/>
            <person name="Rokhsar D.S."/>
        </authorList>
    </citation>
    <scope>NUCLEOTIDE SEQUENCE [LARGE SCALE GENOMIC DNA] OF 6-277</scope>
    <source>
        <strain>cv. Nisqually</strain>
    </source>
</reference>
<reference key="3">
    <citation type="submission" date="2008-12" db="EMBL/GenBank/DDBJ databases">
        <authorList>
            <consortium name="US DOE Joint Genome Institute (JGI-PGF)"/>
            <person name="Grigoriev I.V."/>
            <person name="Terry A."/>
            <person name="Salamov A.A."/>
            <person name="Otillar R."/>
            <person name="Lou Y."/>
            <person name="Lucas S."/>
            <person name="Hammon N."/>
            <person name="Glavina del Rio T."/>
            <person name="Detter J."/>
            <person name="Kalin E."/>
            <person name="Tice H."/>
            <person name="Pitluck S."/>
            <person name="Chapman J."/>
            <person name="Putnam N.H."/>
            <person name="Brunner A."/>
            <person name="Busov V."/>
            <person name="Campbell M."/>
            <person name="Chalot M."/>
            <person name="Covert S."/>
            <person name="Davis J."/>
            <person name="DiFazio S."/>
            <person name="Gribskov M."/>
            <person name="Gunter L."/>
            <person name="Hamberger B."/>
            <person name="Jansson S."/>
            <person name="Joshi C."/>
            <person name="Larimer F."/>
            <person name="Martin F."/>
            <person name="Napoli C."/>
            <person name="Nelson D."/>
            <person name="Ralph S."/>
            <person name="Rombauts S."/>
            <person name="Rouze P."/>
            <person name="Schrader J."/>
            <person name="Tsai C."/>
            <person name="Vahala J."/>
            <person name="Tuskan G."/>
            <person name="Rokhsar D."/>
        </authorList>
    </citation>
    <scope>GENOME REANNOTATION</scope>
    <source>
        <strain>cv. Nisqually</strain>
    </source>
</reference>
<sequence>MDTKRMLQNSVLALTDDTLISIGTVTNAAREVANDGVDQCDPQIITQASSLSKLPLEPSSVDIVIPIFRSIEFPGDLLVKEMFRVLKPGGTILIYSSQQSVIGETDKAISGLQRKLLLGGFLEAEALQPKPVGLSNVVCSFGVKAKKPSWNIGSSFALKKSIKSPVKVQNDDYSDLIDEDSLLTEEDLKKPQLPPVGDCEVGSTRKACKNCTCGRAEEEEKVKLGPTMDQLSNPQSACGSCGLGDAFRCGTCPYKGLPPFKLGEKVSLSENFLVADI</sequence>
<proteinExistence type="evidence at transcript level"/>
<accession>A9PBH9</accession>
<accession>A9PBF6</accession>
<accession>B9H7Y2</accession>
<feature type="chain" id="PRO_0000392346" description="Anamorsin homolog">
    <location>
        <begin position="1"/>
        <end position="277"/>
    </location>
</feature>
<feature type="region of interest" description="N-terminal SAM-like domain" evidence="1">
    <location>
        <begin position="1"/>
        <end position="160"/>
    </location>
</feature>
<feature type="region of interest" description="Linker" evidence="1">
    <location>
        <begin position="161"/>
        <end position="188"/>
    </location>
</feature>
<feature type="region of interest" description="Fe-S binding site A" evidence="1">
    <location>
        <begin position="199"/>
        <end position="213"/>
    </location>
</feature>
<feature type="region of interest" description="Fe-S binding site B" evidence="1">
    <location>
        <begin position="238"/>
        <end position="252"/>
    </location>
</feature>
<feature type="short sequence motif" description="Cx2C motif 1" evidence="1">
    <location>
        <begin position="238"/>
        <end position="241"/>
    </location>
</feature>
<feature type="short sequence motif" description="Cx2C motif 2" evidence="1">
    <location>
        <begin position="249"/>
        <end position="252"/>
    </location>
</feature>
<feature type="binding site" evidence="1">
    <location>
        <position position="199"/>
    </location>
    <ligand>
        <name>[2Fe-2S] cluster</name>
        <dbReference type="ChEBI" id="CHEBI:190135"/>
    </ligand>
</feature>
<feature type="binding site" evidence="1">
    <location>
        <position position="208"/>
    </location>
    <ligand>
        <name>[2Fe-2S] cluster</name>
        <dbReference type="ChEBI" id="CHEBI:190135"/>
    </ligand>
</feature>
<feature type="binding site" evidence="1">
    <location>
        <position position="211"/>
    </location>
    <ligand>
        <name>[2Fe-2S] cluster</name>
        <dbReference type="ChEBI" id="CHEBI:190135"/>
    </ligand>
</feature>
<feature type="binding site" evidence="1">
    <location>
        <position position="213"/>
    </location>
    <ligand>
        <name>[2Fe-2S] cluster</name>
        <dbReference type="ChEBI" id="CHEBI:190135"/>
    </ligand>
</feature>
<feature type="binding site" evidence="1">
    <location>
        <position position="238"/>
    </location>
    <ligand>
        <name>[4Fe-4S] cluster</name>
        <dbReference type="ChEBI" id="CHEBI:49883"/>
    </ligand>
</feature>
<feature type="binding site" evidence="1">
    <location>
        <position position="241"/>
    </location>
    <ligand>
        <name>[4Fe-4S] cluster</name>
        <dbReference type="ChEBI" id="CHEBI:49883"/>
    </ligand>
</feature>
<feature type="binding site" evidence="1">
    <location>
        <position position="249"/>
    </location>
    <ligand>
        <name>[4Fe-4S] cluster</name>
        <dbReference type="ChEBI" id="CHEBI:49883"/>
    </ligand>
</feature>
<feature type="binding site" evidence="1">
    <location>
        <position position="252"/>
    </location>
    <ligand>
        <name>[4Fe-4S] cluster</name>
        <dbReference type="ChEBI" id="CHEBI:49883"/>
    </ligand>
</feature>
<feature type="sequence conflict" description="In Ref. 1; ABK93709." evidence="2" ref="1">
    <original>T</original>
    <variation>A</variation>
    <location>
        <position position="15"/>
    </location>
</feature>
<organism>
    <name type="scientific">Populus trichocarpa</name>
    <name type="common">Western balsam poplar</name>
    <name type="synonym">Populus balsamifera subsp. trichocarpa</name>
    <dbReference type="NCBI Taxonomy" id="3694"/>
    <lineage>
        <taxon>Eukaryota</taxon>
        <taxon>Viridiplantae</taxon>
        <taxon>Streptophyta</taxon>
        <taxon>Embryophyta</taxon>
        <taxon>Tracheophyta</taxon>
        <taxon>Spermatophyta</taxon>
        <taxon>Magnoliopsida</taxon>
        <taxon>eudicotyledons</taxon>
        <taxon>Gunneridae</taxon>
        <taxon>Pentapetalae</taxon>
        <taxon>rosids</taxon>
        <taxon>fabids</taxon>
        <taxon>Malpighiales</taxon>
        <taxon>Salicaceae</taxon>
        <taxon>Saliceae</taxon>
        <taxon>Populus</taxon>
    </lineage>
</organism>
<name>DRE2_POPTR</name>
<keyword id="KW-0001">2Fe-2S</keyword>
<keyword id="KW-0004">4Fe-4S</keyword>
<keyword id="KW-0963">Cytoplasm</keyword>
<keyword id="KW-0408">Iron</keyword>
<keyword id="KW-0411">Iron-sulfur</keyword>
<keyword id="KW-0479">Metal-binding</keyword>
<keyword id="KW-0496">Mitochondrion</keyword>
<keyword id="KW-1185">Reference proteome</keyword>
<dbReference type="EMBL" id="EF145563">
    <property type="protein sequence ID" value="ABK93709.1"/>
    <property type="molecule type" value="mRNA"/>
</dbReference>
<dbReference type="EMBL" id="EF145588">
    <property type="protein sequence ID" value="ABK93732.1"/>
    <property type="molecule type" value="mRNA"/>
</dbReference>
<dbReference type="EMBL" id="CM009294">
    <property type="protein sequence ID" value="EEE93722.2"/>
    <property type="status" value="ALT_SEQ"/>
    <property type="molecule type" value="Genomic_DNA"/>
</dbReference>
<dbReference type="RefSeq" id="XP_006383648.1">
    <property type="nucleotide sequence ID" value="XM_006383586.1"/>
</dbReference>
<dbReference type="FunCoup" id="A9PBH9">
    <property type="interactions" value="4655"/>
</dbReference>
<dbReference type="STRING" id="3694.A9PBH9"/>
<dbReference type="EnsemblPlants" id="Potri.005G198900.1.v4.1">
    <property type="protein sequence ID" value="Potri.005G198900.1.v4.1"/>
    <property type="gene ID" value="Potri.005G198900.v4.1"/>
</dbReference>
<dbReference type="Gramene" id="Potri.005G198900.1.v4.1">
    <property type="protein sequence ID" value="Potri.005G198900.1.v4.1"/>
    <property type="gene ID" value="Potri.005G198900.v4.1"/>
</dbReference>
<dbReference type="KEGG" id="pop:7492497"/>
<dbReference type="eggNOG" id="KOG4020">
    <property type="taxonomic scope" value="Eukaryota"/>
</dbReference>
<dbReference type="InParanoid" id="A9PBH9"/>
<dbReference type="OMA" id="PNVGDCE"/>
<dbReference type="OrthoDB" id="311633at2759"/>
<dbReference type="Proteomes" id="UP000006729">
    <property type="component" value="Chromosome 5"/>
</dbReference>
<dbReference type="ExpressionAtlas" id="A9PBH9">
    <property type="expression patterns" value="baseline and differential"/>
</dbReference>
<dbReference type="GO" id="GO:0005737">
    <property type="term" value="C:cytoplasm"/>
    <property type="evidence" value="ECO:0000318"/>
    <property type="project" value="GO_Central"/>
</dbReference>
<dbReference type="GO" id="GO:0005758">
    <property type="term" value="C:mitochondrial intermembrane space"/>
    <property type="evidence" value="ECO:0007669"/>
    <property type="project" value="UniProtKB-SubCell"/>
</dbReference>
<dbReference type="GO" id="GO:0051537">
    <property type="term" value="F:2 iron, 2 sulfur cluster binding"/>
    <property type="evidence" value="ECO:0007669"/>
    <property type="project" value="UniProtKB-UniRule"/>
</dbReference>
<dbReference type="GO" id="GO:0051539">
    <property type="term" value="F:4 iron, 4 sulfur cluster binding"/>
    <property type="evidence" value="ECO:0007669"/>
    <property type="project" value="UniProtKB-KW"/>
</dbReference>
<dbReference type="GO" id="GO:0009055">
    <property type="term" value="F:electron transfer activity"/>
    <property type="evidence" value="ECO:0007669"/>
    <property type="project" value="UniProtKB-UniRule"/>
</dbReference>
<dbReference type="GO" id="GO:0046872">
    <property type="term" value="F:metal ion binding"/>
    <property type="evidence" value="ECO:0007669"/>
    <property type="project" value="UniProtKB-KW"/>
</dbReference>
<dbReference type="GO" id="GO:0016226">
    <property type="term" value="P:iron-sulfur cluster assembly"/>
    <property type="evidence" value="ECO:0000318"/>
    <property type="project" value="GO_Central"/>
</dbReference>
<dbReference type="FunFam" id="3.40.50.150:FF:000439">
    <property type="entry name" value="Anamorsin homolog"/>
    <property type="match status" value="1"/>
</dbReference>
<dbReference type="Gene3D" id="3.40.50.150">
    <property type="entry name" value="Vaccinia Virus protein VP39"/>
    <property type="match status" value="1"/>
</dbReference>
<dbReference type="HAMAP" id="MF_03115">
    <property type="entry name" value="Anamorsin"/>
    <property type="match status" value="1"/>
</dbReference>
<dbReference type="InterPro" id="IPR007785">
    <property type="entry name" value="Anamorsin"/>
</dbReference>
<dbReference type="InterPro" id="IPR049011">
    <property type="entry name" value="Anamorsin_N_metazoan"/>
</dbReference>
<dbReference type="InterPro" id="IPR046408">
    <property type="entry name" value="CIAPIN1"/>
</dbReference>
<dbReference type="InterPro" id="IPR029063">
    <property type="entry name" value="SAM-dependent_MTases_sf"/>
</dbReference>
<dbReference type="PANTHER" id="PTHR13273">
    <property type="entry name" value="ANAMORSIN"/>
    <property type="match status" value="1"/>
</dbReference>
<dbReference type="PANTHER" id="PTHR13273:SF14">
    <property type="entry name" value="ANAMORSIN"/>
    <property type="match status" value="1"/>
</dbReference>
<dbReference type="Pfam" id="PF20922">
    <property type="entry name" value="Anamorsin_N"/>
    <property type="match status" value="1"/>
</dbReference>
<dbReference type="Pfam" id="PF05093">
    <property type="entry name" value="CIAPIN1"/>
    <property type="match status" value="1"/>
</dbReference>
<dbReference type="SUPFAM" id="SSF53335">
    <property type="entry name" value="S-adenosyl-L-methionine-dependent methyltransferases"/>
    <property type="match status" value="1"/>
</dbReference>
<comment type="function">
    <text evidence="1">Component of the cytosolic iron-sulfur (Fe-S) protein assembly (CIA) machinery. Required for the maturation of extramitochondrial Fe-S proteins. Part of an electron transfer chain functioning in an early step of cytosolic Fe-S biogenesis, facilitating the de novo assembly of a [4Fe-4S] cluster on the cytosolic Fe-S scaffold complex. Electrons are transferred from NADPH via a FAD- and FMN-containing diflavin oxidoreductase. Together with the diflavin oxidoreductase, also required for the assembly of the diferric tyrosyl radical cofactor of ribonucleotide reductase (RNR), probably by providing electrons for reduction during radical cofactor maturation in the catalytic small subunit.</text>
</comment>
<comment type="cofactor">
    <cofactor evidence="1">
        <name>[2Fe-2S] cluster</name>
        <dbReference type="ChEBI" id="CHEBI:190135"/>
    </cofactor>
</comment>
<comment type="cofactor">
    <cofactor evidence="1">
        <name>[4Fe-4S] cluster</name>
        <dbReference type="ChEBI" id="CHEBI:49883"/>
    </cofactor>
</comment>
<comment type="subunit">
    <text evidence="1">Monomer.</text>
</comment>
<comment type="subcellular location">
    <subcellularLocation>
        <location evidence="1">Cytoplasm</location>
    </subcellularLocation>
    <subcellularLocation>
        <location evidence="1">Mitochondrion intermembrane space</location>
    </subcellularLocation>
</comment>
<comment type="domain">
    <text evidence="1">The C-terminal domain binds 2 Fe-S clusters but is otherwise mostly in an intrinsically disordered conformation.</text>
</comment>
<comment type="domain">
    <text evidence="1">The N-terminal domain has structural similarity with S-adenosyl-L-methionine-dependent methyltransferases, but does not bind S-adenosyl-L-methionine. It is required for correct assembly of the 2 Fe-S clusters.</text>
</comment>
<comment type="domain">
    <text evidence="1">The twin Cx2C motifs are involved in the recognition by the mitochondrial MIA40-ERV1 disulfide relay system. The formation of 2 disulfide bonds in the Cx2C motifs through dithiol/disulfide exchange reactions effectively traps the protein in the mitochondrial intermembrane space.</text>
</comment>
<comment type="similarity">
    <text evidence="1">Belongs to the anamorsin family.</text>
</comment>
<comment type="sequence caution" evidence="2">
    <conflict type="erroneous gene model prediction">
        <sequence resource="EMBL-CDS" id="EEE93722"/>
    </conflict>
</comment>